<comment type="function">
    <text evidence="1">Catalyzes the attachment of serine to tRNA(Ser). Is also able to aminoacylate tRNA(Sec) with serine, to form the misacylated tRNA L-seryl-tRNA(Sec), which will be further converted into selenocysteinyl-tRNA(Sec).</text>
</comment>
<comment type="catalytic activity">
    <reaction evidence="1">
        <text>tRNA(Ser) + L-serine + ATP = L-seryl-tRNA(Ser) + AMP + diphosphate + H(+)</text>
        <dbReference type="Rhea" id="RHEA:12292"/>
        <dbReference type="Rhea" id="RHEA-COMP:9669"/>
        <dbReference type="Rhea" id="RHEA-COMP:9703"/>
        <dbReference type="ChEBI" id="CHEBI:15378"/>
        <dbReference type="ChEBI" id="CHEBI:30616"/>
        <dbReference type="ChEBI" id="CHEBI:33019"/>
        <dbReference type="ChEBI" id="CHEBI:33384"/>
        <dbReference type="ChEBI" id="CHEBI:78442"/>
        <dbReference type="ChEBI" id="CHEBI:78533"/>
        <dbReference type="ChEBI" id="CHEBI:456215"/>
        <dbReference type="EC" id="6.1.1.11"/>
    </reaction>
</comment>
<comment type="catalytic activity">
    <reaction evidence="1">
        <text>tRNA(Sec) + L-serine + ATP = L-seryl-tRNA(Sec) + AMP + diphosphate + H(+)</text>
        <dbReference type="Rhea" id="RHEA:42580"/>
        <dbReference type="Rhea" id="RHEA-COMP:9742"/>
        <dbReference type="Rhea" id="RHEA-COMP:10128"/>
        <dbReference type="ChEBI" id="CHEBI:15378"/>
        <dbReference type="ChEBI" id="CHEBI:30616"/>
        <dbReference type="ChEBI" id="CHEBI:33019"/>
        <dbReference type="ChEBI" id="CHEBI:33384"/>
        <dbReference type="ChEBI" id="CHEBI:78442"/>
        <dbReference type="ChEBI" id="CHEBI:78533"/>
        <dbReference type="ChEBI" id="CHEBI:456215"/>
        <dbReference type="EC" id="6.1.1.11"/>
    </reaction>
</comment>
<comment type="pathway">
    <text evidence="1">Aminoacyl-tRNA biosynthesis; selenocysteinyl-tRNA(Sec) biosynthesis; L-seryl-tRNA(Sec) from L-serine and tRNA(Sec): step 1/1.</text>
</comment>
<comment type="subunit">
    <text evidence="1">Homodimer. The tRNA molecule binds across the dimer.</text>
</comment>
<comment type="subcellular location">
    <subcellularLocation>
        <location evidence="1">Cytoplasm</location>
    </subcellularLocation>
</comment>
<comment type="domain">
    <text evidence="1">Consists of two distinct domains, a catalytic core and a N-terminal extension that is involved in tRNA binding.</text>
</comment>
<comment type="similarity">
    <text evidence="1">Belongs to the class-II aminoacyl-tRNA synthetase family. Type-1 seryl-tRNA synthetase subfamily.</text>
</comment>
<name>SYS_LEGPH</name>
<sequence length="426" mass="48080">MLDNQLLRENPQYVATQLLKRGFQFDAVTFSQLEEKRKALQVSTQSLQNERNLRSKAIGEAKSRGENIGPMREEVNKLGAILEQQKTELDEVLKQIEVISLSLPNIPHESVPVGKDELDNQEIRKWGDVPAFSFPVKSHDELGEALGQMDFALAAKITGSRFVVMKGHLARLHRALIQFMLDIHIQQHGYQEIYVPYIVNADSLLGTGQLPKFEADLFKLTGDNGYYLTSTSEIPVTNTVREMILSAEQLPIRYVCHSPCFRSEAGSYGKDTKGMIRQHQFEKVELVWITKPEDSYNALEQLTQHAEIILQRLNLPYRVVALCTGDIGAGSAKTYDLEVWLPSQNTYREISSCSNMEAFQARRMKARFRNPDTNEIQLVHTLNGSGLAVGRTLVAIMENYQDEHGNIHIPDALKPYLGGIDIISVK</sequence>
<reference key="1">
    <citation type="journal article" date="2004" name="Science">
        <title>The genomic sequence of the accidental pathogen Legionella pneumophila.</title>
        <authorList>
            <person name="Chien M."/>
            <person name="Morozova I."/>
            <person name="Shi S."/>
            <person name="Sheng H."/>
            <person name="Chen J."/>
            <person name="Gomez S.M."/>
            <person name="Asamani G."/>
            <person name="Hill K."/>
            <person name="Nuara J."/>
            <person name="Feder M."/>
            <person name="Rineer J."/>
            <person name="Greenberg J.J."/>
            <person name="Steshenko V."/>
            <person name="Park S.H."/>
            <person name="Zhao B."/>
            <person name="Teplitskaya E."/>
            <person name="Edwards J.R."/>
            <person name="Pampou S."/>
            <person name="Georghiou A."/>
            <person name="Chou I.-C."/>
            <person name="Iannuccilli W."/>
            <person name="Ulz M.E."/>
            <person name="Kim D.H."/>
            <person name="Geringer-Sameth A."/>
            <person name="Goldsberry C."/>
            <person name="Morozov P."/>
            <person name="Fischer S.G."/>
            <person name="Segal G."/>
            <person name="Qu X."/>
            <person name="Rzhetsky A."/>
            <person name="Zhang P."/>
            <person name="Cayanis E."/>
            <person name="De Jong P.J."/>
            <person name="Ju J."/>
            <person name="Kalachikov S."/>
            <person name="Shuman H.A."/>
            <person name="Russo J.J."/>
        </authorList>
    </citation>
    <scope>NUCLEOTIDE SEQUENCE [LARGE SCALE GENOMIC DNA]</scope>
    <source>
        <strain>Philadelphia 1 / ATCC 33152 / DSM 7513</strain>
    </source>
</reference>
<gene>
    <name evidence="1" type="primary">serS</name>
    <name type="ordered locus">lpg0513</name>
</gene>
<dbReference type="EC" id="6.1.1.11" evidence="1"/>
<dbReference type="EMBL" id="AE017354">
    <property type="protein sequence ID" value="AAU26610.1"/>
    <property type="molecule type" value="Genomic_DNA"/>
</dbReference>
<dbReference type="RefSeq" id="WP_010946261.1">
    <property type="nucleotide sequence ID" value="NC_002942.5"/>
</dbReference>
<dbReference type="RefSeq" id="YP_094557.1">
    <property type="nucleotide sequence ID" value="NC_002942.5"/>
</dbReference>
<dbReference type="SMR" id="Q5ZY59"/>
<dbReference type="STRING" id="272624.lpg0513"/>
<dbReference type="PaxDb" id="272624-lpg0513"/>
<dbReference type="GeneID" id="57034513"/>
<dbReference type="KEGG" id="lpn:lpg0513"/>
<dbReference type="PATRIC" id="fig|272624.6.peg.534"/>
<dbReference type="eggNOG" id="COG0172">
    <property type="taxonomic scope" value="Bacteria"/>
</dbReference>
<dbReference type="HOGENOM" id="CLU_023797_1_1_6"/>
<dbReference type="OrthoDB" id="9804647at2"/>
<dbReference type="UniPathway" id="UPA00906">
    <property type="reaction ID" value="UER00895"/>
</dbReference>
<dbReference type="Proteomes" id="UP000000609">
    <property type="component" value="Chromosome"/>
</dbReference>
<dbReference type="GO" id="GO:0005737">
    <property type="term" value="C:cytoplasm"/>
    <property type="evidence" value="ECO:0007669"/>
    <property type="project" value="UniProtKB-SubCell"/>
</dbReference>
<dbReference type="GO" id="GO:0005524">
    <property type="term" value="F:ATP binding"/>
    <property type="evidence" value="ECO:0007669"/>
    <property type="project" value="UniProtKB-UniRule"/>
</dbReference>
<dbReference type="GO" id="GO:0004828">
    <property type="term" value="F:serine-tRNA ligase activity"/>
    <property type="evidence" value="ECO:0007669"/>
    <property type="project" value="UniProtKB-UniRule"/>
</dbReference>
<dbReference type="GO" id="GO:0016260">
    <property type="term" value="P:selenocysteine biosynthetic process"/>
    <property type="evidence" value="ECO:0007669"/>
    <property type="project" value="UniProtKB-UniRule"/>
</dbReference>
<dbReference type="GO" id="GO:0006434">
    <property type="term" value="P:seryl-tRNA aminoacylation"/>
    <property type="evidence" value="ECO:0007669"/>
    <property type="project" value="UniProtKB-UniRule"/>
</dbReference>
<dbReference type="CDD" id="cd00770">
    <property type="entry name" value="SerRS_core"/>
    <property type="match status" value="1"/>
</dbReference>
<dbReference type="Gene3D" id="3.30.930.10">
    <property type="entry name" value="Bira Bifunctional Protein, Domain 2"/>
    <property type="match status" value="1"/>
</dbReference>
<dbReference type="Gene3D" id="1.10.287.40">
    <property type="entry name" value="Serine-tRNA synthetase, tRNA binding domain"/>
    <property type="match status" value="1"/>
</dbReference>
<dbReference type="HAMAP" id="MF_00176">
    <property type="entry name" value="Ser_tRNA_synth_type1"/>
    <property type="match status" value="1"/>
</dbReference>
<dbReference type="InterPro" id="IPR002314">
    <property type="entry name" value="aa-tRNA-synt_IIb"/>
</dbReference>
<dbReference type="InterPro" id="IPR006195">
    <property type="entry name" value="aa-tRNA-synth_II"/>
</dbReference>
<dbReference type="InterPro" id="IPR045864">
    <property type="entry name" value="aa-tRNA-synth_II/BPL/LPL"/>
</dbReference>
<dbReference type="InterPro" id="IPR002317">
    <property type="entry name" value="Ser-tRNA-ligase_type_1"/>
</dbReference>
<dbReference type="InterPro" id="IPR015866">
    <property type="entry name" value="Ser-tRNA-synth_1_N"/>
</dbReference>
<dbReference type="InterPro" id="IPR042103">
    <property type="entry name" value="SerRS_1_N_sf"/>
</dbReference>
<dbReference type="InterPro" id="IPR033729">
    <property type="entry name" value="SerRS_core"/>
</dbReference>
<dbReference type="InterPro" id="IPR010978">
    <property type="entry name" value="tRNA-bd_arm"/>
</dbReference>
<dbReference type="NCBIfam" id="TIGR00414">
    <property type="entry name" value="serS"/>
    <property type="match status" value="1"/>
</dbReference>
<dbReference type="PANTHER" id="PTHR43697:SF1">
    <property type="entry name" value="SERINE--TRNA LIGASE"/>
    <property type="match status" value="1"/>
</dbReference>
<dbReference type="PANTHER" id="PTHR43697">
    <property type="entry name" value="SERYL-TRNA SYNTHETASE"/>
    <property type="match status" value="1"/>
</dbReference>
<dbReference type="Pfam" id="PF02403">
    <property type="entry name" value="Seryl_tRNA_N"/>
    <property type="match status" value="1"/>
</dbReference>
<dbReference type="Pfam" id="PF00587">
    <property type="entry name" value="tRNA-synt_2b"/>
    <property type="match status" value="1"/>
</dbReference>
<dbReference type="PIRSF" id="PIRSF001529">
    <property type="entry name" value="Ser-tRNA-synth_IIa"/>
    <property type="match status" value="1"/>
</dbReference>
<dbReference type="PRINTS" id="PR00981">
    <property type="entry name" value="TRNASYNTHSER"/>
</dbReference>
<dbReference type="SUPFAM" id="SSF55681">
    <property type="entry name" value="Class II aaRS and biotin synthetases"/>
    <property type="match status" value="1"/>
</dbReference>
<dbReference type="SUPFAM" id="SSF46589">
    <property type="entry name" value="tRNA-binding arm"/>
    <property type="match status" value="1"/>
</dbReference>
<dbReference type="PROSITE" id="PS50862">
    <property type="entry name" value="AA_TRNA_LIGASE_II"/>
    <property type="match status" value="1"/>
</dbReference>
<proteinExistence type="inferred from homology"/>
<protein>
    <recommendedName>
        <fullName evidence="1">Serine--tRNA ligase</fullName>
        <ecNumber evidence="1">6.1.1.11</ecNumber>
    </recommendedName>
    <alternativeName>
        <fullName evidence="1">Seryl-tRNA synthetase</fullName>
        <shortName evidence="1">SerRS</shortName>
    </alternativeName>
    <alternativeName>
        <fullName evidence="1">Seryl-tRNA(Ser/Sec) synthetase</fullName>
    </alternativeName>
</protein>
<evidence type="ECO:0000255" key="1">
    <source>
        <dbReference type="HAMAP-Rule" id="MF_00176"/>
    </source>
</evidence>
<feature type="chain" id="PRO_0000122068" description="Serine--tRNA ligase">
    <location>
        <begin position="1"/>
        <end position="426"/>
    </location>
</feature>
<feature type="binding site" evidence="1">
    <location>
        <begin position="231"/>
        <end position="233"/>
    </location>
    <ligand>
        <name>L-serine</name>
        <dbReference type="ChEBI" id="CHEBI:33384"/>
    </ligand>
</feature>
<feature type="binding site" evidence="1">
    <location>
        <begin position="262"/>
        <end position="264"/>
    </location>
    <ligand>
        <name>ATP</name>
        <dbReference type="ChEBI" id="CHEBI:30616"/>
    </ligand>
</feature>
<feature type="binding site" evidence="1">
    <location>
        <position position="285"/>
    </location>
    <ligand>
        <name>L-serine</name>
        <dbReference type="ChEBI" id="CHEBI:33384"/>
    </ligand>
</feature>
<feature type="binding site" evidence="1">
    <location>
        <begin position="349"/>
        <end position="352"/>
    </location>
    <ligand>
        <name>ATP</name>
        <dbReference type="ChEBI" id="CHEBI:30616"/>
    </ligand>
</feature>
<feature type="binding site" evidence="1">
    <location>
        <position position="385"/>
    </location>
    <ligand>
        <name>L-serine</name>
        <dbReference type="ChEBI" id="CHEBI:33384"/>
    </ligand>
</feature>
<organism>
    <name type="scientific">Legionella pneumophila subsp. pneumophila (strain Philadelphia 1 / ATCC 33152 / DSM 7513)</name>
    <dbReference type="NCBI Taxonomy" id="272624"/>
    <lineage>
        <taxon>Bacteria</taxon>
        <taxon>Pseudomonadati</taxon>
        <taxon>Pseudomonadota</taxon>
        <taxon>Gammaproteobacteria</taxon>
        <taxon>Legionellales</taxon>
        <taxon>Legionellaceae</taxon>
        <taxon>Legionella</taxon>
    </lineage>
</organism>
<keyword id="KW-0030">Aminoacyl-tRNA synthetase</keyword>
<keyword id="KW-0067">ATP-binding</keyword>
<keyword id="KW-0963">Cytoplasm</keyword>
<keyword id="KW-0436">Ligase</keyword>
<keyword id="KW-0547">Nucleotide-binding</keyword>
<keyword id="KW-0648">Protein biosynthesis</keyword>
<keyword id="KW-1185">Reference proteome</keyword>
<accession>Q5ZY59</accession>